<reference key="1">
    <citation type="journal article" date="2004" name="J. Bacteriol.">
        <title>Comparative genomics of two Leptospira interrogans serovars reveals novel insights into physiology and pathogenesis.</title>
        <authorList>
            <person name="Nascimento A.L.T.O."/>
            <person name="Ko A.I."/>
            <person name="Martins E.A.L."/>
            <person name="Monteiro-Vitorello C.B."/>
            <person name="Ho P.L."/>
            <person name="Haake D.A."/>
            <person name="Verjovski-Almeida S."/>
            <person name="Hartskeerl R.A."/>
            <person name="Marques M.V."/>
            <person name="Oliveira M.C."/>
            <person name="Menck C.F.M."/>
            <person name="Leite L.C.C."/>
            <person name="Carrer H."/>
            <person name="Coutinho L.L."/>
            <person name="Degrave W.M."/>
            <person name="Dellagostin O.A."/>
            <person name="El-Dorry H."/>
            <person name="Ferro E.S."/>
            <person name="Ferro M.I.T."/>
            <person name="Furlan L.R."/>
            <person name="Gamberini M."/>
            <person name="Giglioti E.A."/>
            <person name="Goes-Neto A."/>
            <person name="Goldman G.H."/>
            <person name="Goldman M.H.S."/>
            <person name="Harakava R."/>
            <person name="Jeronimo S.M.B."/>
            <person name="Junqueira-de-Azevedo I.L.M."/>
            <person name="Kimura E.T."/>
            <person name="Kuramae E.E."/>
            <person name="Lemos E.G.M."/>
            <person name="Lemos M.V.F."/>
            <person name="Marino C.L."/>
            <person name="Nunes L.R."/>
            <person name="de Oliveira R.C."/>
            <person name="Pereira G.G."/>
            <person name="Reis M.S."/>
            <person name="Schriefer A."/>
            <person name="Siqueira W.J."/>
            <person name="Sommer P."/>
            <person name="Tsai S.M."/>
            <person name="Simpson A.J.G."/>
            <person name="Ferro J.A."/>
            <person name="Camargo L.E.A."/>
            <person name="Kitajima J.P."/>
            <person name="Setubal J.C."/>
            <person name="Van Sluys M.A."/>
        </authorList>
    </citation>
    <scope>NUCLEOTIDE SEQUENCE [LARGE SCALE GENOMIC DNA]</scope>
    <source>
        <strain>Fiocruz L1-130</strain>
    </source>
</reference>
<comment type="function">
    <text evidence="1">Catalyzes the irreversible transfer of a propylamine group from the amino donor S-adenosylmethioninamine (decarboxy-AdoMet) to putrescine (1,4-diaminobutane) to yield spermidine.</text>
</comment>
<comment type="catalytic activity">
    <reaction evidence="1">
        <text>S-adenosyl 3-(methylsulfanyl)propylamine + putrescine = S-methyl-5'-thioadenosine + spermidine + H(+)</text>
        <dbReference type="Rhea" id="RHEA:12721"/>
        <dbReference type="ChEBI" id="CHEBI:15378"/>
        <dbReference type="ChEBI" id="CHEBI:17509"/>
        <dbReference type="ChEBI" id="CHEBI:57443"/>
        <dbReference type="ChEBI" id="CHEBI:57834"/>
        <dbReference type="ChEBI" id="CHEBI:326268"/>
        <dbReference type="EC" id="2.5.1.16"/>
    </reaction>
</comment>
<comment type="pathway">
    <text evidence="1">Amine and polyamine biosynthesis; spermidine biosynthesis; spermidine from putrescine: step 1/1.</text>
</comment>
<comment type="subunit">
    <text evidence="1">Homodimer or homotetramer.</text>
</comment>
<comment type="subcellular location">
    <subcellularLocation>
        <location evidence="1">Cell membrane</location>
        <topology evidence="1">Multi-pass membrane protein</topology>
    </subcellularLocation>
</comment>
<comment type="similarity">
    <text evidence="1">Belongs to the spermidine/spermine synthase family.</text>
</comment>
<keyword id="KW-1003">Cell membrane</keyword>
<keyword id="KW-0472">Membrane</keyword>
<keyword id="KW-0620">Polyamine biosynthesis</keyword>
<keyword id="KW-0745">Spermidine biosynthesis</keyword>
<keyword id="KW-0808">Transferase</keyword>
<keyword id="KW-0812">Transmembrane</keyword>
<keyword id="KW-1133">Transmembrane helix</keyword>
<name>SPEE_LEPIC</name>
<sequence>MQTALYISVLIISSCGLVYELLAGTIASYLLGETVTQFSLIIGTYLFSMGVGSWLSKYLEKDLIPKFLEIELAIGLVGGFSSAILYLSFGQIRYFQIPLFLLVILIGILVGLEIPVLLRILKKELQFKELVSRVLSLDYVGALLASILFPIFFAPKLGLMRTGFIFGILNVGVALWGTWVLPLRQSKIIILRAQSVVVLTLLILGFSYSDLITYYSEESLYTDEIILSKQTQYQRIIVTRWKNEIRLFLNGHLQFSSRDEYRYHETLVHPALLAHPTPKKVLVLGGGDGLAVREILKHKNVESVTLVDLDSAITNLFSEHGILKKLNEESLKNSKVTVINTDAFLWLEESDQIFDVVLIDFPDPSNFSLGKLYTTAFFHTLKRRMNETSVLEIQSTSPLFARSSYWCIERTIASLGFYTLPLHVYVPSFGEWGFVLAGQRPIQFKKDFPKDLKFLNIQELESIQTFPQDMSRVPVEINRLDNQALVRYYDREWNRILD</sequence>
<gene>
    <name evidence="1" type="primary">speE</name>
    <name type="ordered locus">LIC_10437</name>
</gene>
<protein>
    <recommendedName>
        <fullName evidence="1">Polyamine aminopropyltransferase</fullName>
    </recommendedName>
    <alternativeName>
        <fullName evidence="1">Putrescine aminopropyltransferase</fullName>
        <shortName evidence="1">PAPT</shortName>
    </alternativeName>
    <alternativeName>
        <fullName evidence="1">Spermidine synthase</fullName>
        <shortName evidence="1">SPDS</shortName>
        <shortName evidence="1">SPDSY</shortName>
        <ecNumber evidence="1">2.5.1.16</ecNumber>
    </alternativeName>
</protein>
<accession>Q72V65</accession>
<dbReference type="EC" id="2.5.1.16" evidence="1"/>
<dbReference type="EMBL" id="AE016823">
    <property type="protein sequence ID" value="AAS69059.1"/>
    <property type="molecule type" value="Genomic_DNA"/>
</dbReference>
<dbReference type="RefSeq" id="WP_001192499.1">
    <property type="nucleotide sequence ID" value="NC_005823.1"/>
</dbReference>
<dbReference type="SMR" id="Q72V65"/>
<dbReference type="KEGG" id="lic:LIC_10437"/>
<dbReference type="HOGENOM" id="CLU_034289_1_0_12"/>
<dbReference type="UniPathway" id="UPA00248">
    <property type="reaction ID" value="UER00314"/>
</dbReference>
<dbReference type="Proteomes" id="UP000007037">
    <property type="component" value="Chromosome I"/>
</dbReference>
<dbReference type="GO" id="GO:0005886">
    <property type="term" value="C:plasma membrane"/>
    <property type="evidence" value="ECO:0007669"/>
    <property type="project" value="UniProtKB-SubCell"/>
</dbReference>
<dbReference type="GO" id="GO:0004766">
    <property type="term" value="F:spermidine synthase activity"/>
    <property type="evidence" value="ECO:0007669"/>
    <property type="project" value="UniProtKB-UniRule"/>
</dbReference>
<dbReference type="GO" id="GO:0010487">
    <property type="term" value="F:thermospermine synthase activity"/>
    <property type="evidence" value="ECO:0007669"/>
    <property type="project" value="UniProtKB-ARBA"/>
</dbReference>
<dbReference type="GO" id="GO:0008295">
    <property type="term" value="P:spermidine biosynthetic process"/>
    <property type="evidence" value="ECO:0007669"/>
    <property type="project" value="UniProtKB-UniRule"/>
</dbReference>
<dbReference type="CDD" id="cd02440">
    <property type="entry name" value="AdoMet_MTases"/>
    <property type="match status" value="1"/>
</dbReference>
<dbReference type="FunFam" id="3.40.50.150:FF:000088">
    <property type="entry name" value="Polyamine aminopropyltransferase"/>
    <property type="match status" value="1"/>
</dbReference>
<dbReference type="Gene3D" id="3.40.50.150">
    <property type="entry name" value="Vaccinia Virus protein VP39"/>
    <property type="match status" value="1"/>
</dbReference>
<dbReference type="HAMAP" id="MF_00198">
    <property type="entry name" value="Spermidine_synth"/>
    <property type="match status" value="1"/>
</dbReference>
<dbReference type="InterPro" id="IPR030374">
    <property type="entry name" value="PABS"/>
</dbReference>
<dbReference type="InterPro" id="IPR030373">
    <property type="entry name" value="PABS_CS"/>
</dbReference>
<dbReference type="InterPro" id="IPR029063">
    <property type="entry name" value="SAM-dependent_MTases_sf"/>
</dbReference>
<dbReference type="InterPro" id="IPR001045">
    <property type="entry name" value="Spermi_synthase"/>
</dbReference>
<dbReference type="NCBIfam" id="NF002956">
    <property type="entry name" value="PRK03612.1"/>
    <property type="match status" value="1"/>
</dbReference>
<dbReference type="PANTHER" id="PTHR43317">
    <property type="entry name" value="THERMOSPERMINE SYNTHASE ACAULIS5"/>
    <property type="match status" value="1"/>
</dbReference>
<dbReference type="PANTHER" id="PTHR43317:SF1">
    <property type="entry name" value="THERMOSPERMINE SYNTHASE ACAULIS5"/>
    <property type="match status" value="1"/>
</dbReference>
<dbReference type="Pfam" id="PF01564">
    <property type="entry name" value="Spermine_synth"/>
    <property type="match status" value="1"/>
</dbReference>
<dbReference type="SUPFAM" id="SSF53335">
    <property type="entry name" value="S-adenosyl-L-methionine-dependent methyltransferases"/>
    <property type="match status" value="1"/>
</dbReference>
<dbReference type="PROSITE" id="PS01330">
    <property type="entry name" value="PABS_1"/>
    <property type="match status" value="1"/>
</dbReference>
<dbReference type="PROSITE" id="PS51006">
    <property type="entry name" value="PABS_2"/>
    <property type="match status" value="1"/>
</dbReference>
<feature type="chain" id="PRO_0000156484" description="Polyamine aminopropyltransferase">
    <location>
        <begin position="1"/>
        <end position="498"/>
    </location>
</feature>
<feature type="transmembrane region" description="Helical" evidence="1">
    <location>
        <begin position="7"/>
        <end position="27"/>
    </location>
</feature>
<feature type="transmembrane region" description="Helical" evidence="1">
    <location>
        <begin position="35"/>
        <end position="55"/>
    </location>
</feature>
<feature type="transmembrane region" description="Helical" evidence="1">
    <location>
        <begin position="67"/>
        <end position="87"/>
    </location>
</feature>
<feature type="transmembrane region" description="Helical" evidence="1">
    <location>
        <begin position="97"/>
        <end position="117"/>
    </location>
</feature>
<feature type="transmembrane region" description="Helical" evidence="1">
    <location>
        <begin position="134"/>
        <end position="154"/>
    </location>
</feature>
<feature type="transmembrane region" description="Helical" evidence="1">
    <location>
        <begin position="163"/>
        <end position="183"/>
    </location>
</feature>
<feature type="domain" description="PABS" evidence="1">
    <location>
        <begin position="200"/>
        <end position="439"/>
    </location>
</feature>
<feature type="region of interest" description="Spermidine synthase">
    <location>
        <begin position="196"/>
        <end position="446"/>
    </location>
</feature>
<feature type="active site" description="Proton acceptor" evidence="1">
    <location>
        <position position="360"/>
    </location>
</feature>
<feature type="binding site" evidence="1">
    <location>
        <position position="234"/>
    </location>
    <ligand>
        <name>S-methyl-5'-thioadenosine</name>
        <dbReference type="ChEBI" id="CHEBI:17509"/>
    </ligand>
</feature>
<feature type="binding site" evidence="1">
    <location>
        <position position="264"/>
    </location>
    <ligand>
        <name>spermidine</name>
        <dbReference type="ChEBI" id="CHEBI:57834"/>
    </ligand>
</feature>
<feature type="binding site" evidence="1">
    <location>
        <position position="288"/>
    </location>
    <ligand>
        <name>spermidine</name>
        <dbReference type="ChEBI" id="CHEBI:57834"/>
    </ligand>
</feature>
<feature type="binding site" evidence="1">
    <location>
        <position position="308"/>
    </location>
    <ligand>
        <name>S-methyl-5'-thioadenosine</name>
        <dbReference type="ChEBI" id="CHEBI:17509"/>
    </ligand>
</feature>
<feature type="binding site" evidence="1">
    <location>
        <begin position="342"/>
        <end position="343"/>
    </location>
    <ligand>
        <name>S-methyl-5'-thioadenosine</name>
        <dbReference type="ChEBI" id="CHEBI:17509"/>
    </ligand>
</feature>
<organism>
    <name type="scientific">Leptospira interrogans serogroup Icterohaemorrhagiae serovar copenhageni (strain Fiocruz L1-130)</name>
    <dbReference type="NCBI Taxonomy" id="267671"/>
    <lineage>
        <taxon>Bacteria</taxon>
        <taxon>Pseudomonadati</taxon>
        <taxon>Spirochaetota</taxon>
        <taxon>Spirochaetia</taxon>
        <taxon>Leptospirales</taxon>
        <taxon>Leptospiraceae</taxon>
        <taxon>Leptospira</taxon>
    </lineage>
</organism>
<proteinExistence type="inferred from homology"/>
<evidence type="ECO:0000255" key="1">
    <source>
        <dbReference type="HAMAP-Rule" id="MF_00198"/>
    </source>
</evidence>